<reference key="1">
    <citation type="journal article" date="2000" name="Nature">
        <title>Sequence and analysis of chromosome 1 of the plant Arabidopsis thaliana.</title>
        <authorList>
            <person name="Theologis A."/>
            <person name="Ecker J.R."/>
            <person name="Palm C.J."/>
            <person name="Federspiel N.A."/>
            <person name="Kaul S."/>
            <person name="White O."/>
            <person name="Alonso J."/>
            <person name="Altafi H."/>
            <person name="Araujo R."/>
            <person name="Bowman C.L."/>
            <person name="Brooks S.Y."/>
            <person name="Buehler E."/>
            <person name="Chan A."/>
            <person name="Chao Q."/>
            <person name="Chen H."/>
            <person name="Cheuk R.F."/>
            <person name="Chin C.W."/>
            <person name="Chung M.K."/>
            <person name="Conn L."/>
            <person name="Conway A.B."/>
            <person name="Conway A.R."/>
            <person name="Creasy T.H."/>
            <person name="Dewar K."/>
            <person name="Dunn P."/>
            <person name="Etgu P."/>
            <person name="Feldblyum T.V."/>
            <person name="Feng J.-D."/>
            <person name="Fong B."/>
            <person name="Fujii C.Y."/>
            <person name="Gill J.E."/>
            <person name="Goldsmith A.D."/>
            <person name="Haas B."/>
            <person name="Hansen N.F."/>
            <person name="Hughes B."/>
            <person name="Huizar L."/>
            <person name="Hunter J.L."/>
            <person name="Jenkins J."/>
            <person name="Johnson-Hopson C."/>
            <person name="Khan S."/>
            <person name="Khaykin E."/>
            <person name="Kim C.J."/>
            <person name="Koo H.L."/>
            <person name="Kremenetskaia I."/>
            <person name="Kurtz D.B."/>
            <person name="Kwan A."/>
            <person name="Lam B."/>
            <person name="Langin-Hooper S."/>
            <person name="Lee A."/>
            <person name="Lee J.M."/>
            <person name="Lenz C.A."/>
            <person name="Li J.H."/>
            <person name="Li Y.-P."/>
            <person name="Lin X."/>
            <person name="Liu S.X."/>
            <person name="Liu Z.A."/>
            <person name="Luros J.S."/>
            <person name="Maiti R."/>
            <person name="Marziali A."/>
            <person name="Militscher J."/>
            <person name="Miranda M."/>
            <person name="Nguyen M."/>
            <person name="Nierman W.C."/>
            <person name="Osborne B.I."/>
            <person name="Pai G."/>
            <person name="Peterson J."/>
            <person name="Pham P.K."/>
            <person name="Rizzo M."/>
            <person name="Rooney T."/>
            <person name="Rowley D."/>
            <person name="Sakano H."/>
            <person name="Salzberg S.L."/>
            <person name="Schwartz J.R."/>
            <person name="Shinn P."/>
            <person name="Southwick A.M."/>
            <person name="Sun H."/>
            <person name="Tallon L.J."/>
            <person name="Tambunga G."/>
            <person name="Toriumi M.J."/>
            <person name="Town C.D."/>
            <person name="Utterback T."/>
            <person name="Van Aken S."/>
            <person name="Vaysberg M."/>
            <person name="Vysotskaia V.S."/>
            <person name="Walker M."/>
            <person name="Wu D."/>
            <person name="Yu G."/>
            <person name="Fraser C.M."/>
            <person name="Venter J.C."/>
            <person name="Davis R.W."/>
        </authorList>
    </citation>
    <scope>NUCLEOTIDE SEQUENCE [LARGE SCALE GENOMIC DNA]</scope>
    <source>
        <strain>cv. Columbia</strain>
    </source>
</reference>
<reference key="2">
    <citation type="journal article" date="2017" name="Plant J.">
        <title>Araport11: a complete reannotation of the Arabidopsis thaliana reference genome.</title>
        <authorList>
            <person name="Cheng C.Y."/>
            <person name="Krishnakumar V."/>
            <person name="Chan A.P."/>
            <person name="Thibaud-Nissen F."/>
            <person name="Schobel S."/>
            <person name="Town C.D."/>
        </authorList>
    </citation>
    <scope>GENOME REANNOTATION</scope>
    <source>
        <strain>cv. Columbia</strain>
    </source>
</reference>
<reference key="3">
    <citation type="journal article" date="2008" name="J. Plant Physiol.">
        <title>Computational identification and analysis of immune-associated nucleotide gene family in Arabidopsis thaliana.</title>
        <authorList>
            <person name="Liu C."/>
            <person name="Wang T."/>
            <person name="Zhang W."/>
            <person name="Li X."/>
        </authorList>
    </citation>
    <scope>GENE FAMILY</scope>
    <scope>NOMENCLATURE</scope>
</reference>
<comment type="tissue specificity">
    <text evidence="6">Mostly expressed in pollen. Also detected in lateral roots and radicles.</text>
</comment>
<comment type="developmental stage">
    <text evidence="6">Highest expression levels in young seedlings and much lower expression abundance in the later developmental stages.</text>
</comment>
<comment type="induction">
    <text evidence="6">Up-regulated by brassinolides and nematode infection. Down-regulated by 2-aminoethoxyvinylglycine (AVG), high CO(2), isoxaben, and propiconazole treatments.</text>
</comment>
<comment type="similarity">
    <text evidence="5">Belongs to the TRAFAC class TrmE-Era-EngA-EngB-Septin-like GTPase superfamily. AIG1/Toc34/Toc159-like paraseptin GTPase family. IAN subfamily.</text>
</comment>
<feature type="chain" id="PRO_0000438027" description="Immune-associated nucleotide-binding protein 3">
    <location>
        <begin position="1"/>
        <end position="334"/>
    </location>
</feature>
<feature type="domain" description="AIG1-type G" evidence="3">
    <location>
        <begin position="11"/>
        <end position="219"/>
    </location>
</feature>
<feature type="region of interest" description="G1" evidence="3">
    <location>
        <begin position="20"/>
        <end position="27"/>
    </location>
</feature>
<feature type="region of interest" description="G2" evidence="3">
    <location>
        <begin position="47"/>
        <end position="51"/>
    </location>
</feature>
<feature type="region of interest" description="G3" evidence="3">
    <location>
        <begin position="69"/>
        <end position="72"/>
    </location>
</feature>
<feature type="region of interest" description="G4" evidence="3">
    <location>
        <begin position="139"/>
        <end position="142"/>
    </location>
</feature>
<feature type="region of interest" description="G5" evidence="3">
    <location>
        <begin position="178"/>
        <end position="180"/>
    </location>
</feature>
<feature type="coiled-coil region" evidence="2">
    <location>
        <begin position="272"/>
        <end position="306"/>
    </location>
</feature>
<feature type="binding site" evidence="1">
    <location>
        <begin position="20"/>
        <end position="28"/>
    </location>
    <ligand>
        <name>GTP</name>
        <dbReference type="ChEBI" id="CHEBI:37565"/>
    </ligand>
</feature>
<feature type="binding site" evidence="1">
    <location>
        <position position="41"/>
    </location>
    <ligand>
        <name>GTP</name>
        <dbReference type="ChEBI" id="CHEBI:37565"/>
    </ligand>
</feature>
<feature type="binding site" evidence="1">
    <location>
        <position position="179"/>
    </location>
    <ligand>
        <name>GTP</name>
        <dbReference type="ChEBI" id="CHEBI:37565"/>
    </ligand>
</feature>
<sequence length="334" mass="37290">MNHSEQASAYKAVKNIVLVGRTGNGKSATGNSLIGKDVFVSEAKATGVTKTCQTYKAVTPGGSRINVIDTPGLFDLSVSAEFISKEIINCLRLAEGGLHVVVLVLSVRTRITQEEENTLSTLQVLFGNEILDYLIVLFTGGDELEANNQTLDDYFHQGCPYFLKTVLGLCDDRKVMFNNMTKDKHKKVEQVQQFLALVAKVEERNEGKPFRGKMYLEIKEETEWLKKQKKAVEASNLGEAELAKMKKELQMEHDTRMSQMEDMVKNMLKETSAAHERMVSMLNENLENAHRENIDLRKAHDHEQKKRMMIQLGLGVPGALGMIAPAALAMCSIL</sequence>
<accession>Q9C8U6</accession>
<name>IAN3_ARATH</name>
<proteinExistence type="inferred from homology"/>
<evidence type="ECO:0000250" key="1">
    <source>
        <dbReference type="UniProtKB" id="Q8NHV1"/>
    </source>
</evidence>
<evidence type="ECO:0000255" key="2"/>
<evidence type="ECO:0000255" key="3">
    <source>
        <dbReference type="PROSITE-ProRule" id="PRU01057"/>
    </source>
</evidence>
<evidence type="ECO:0000303" key="4">
    <source>
    </source>
</evidence>
<evidence type="ECO:0000305" key="5"/>
<evidence type="ECO:0000305" key="6">
    <source>
    </source>
</evidence>
<evidence type="ECO:0000312" key="7">
    <source>
        <dbReference type="Araport" id="AT1G33890"/>
    </source>
</evidence>
<evidence type="ECO:0000312" key="8">
    <source>
        <dbReference type="EMBL" id="AAG52210.1"/>
    </source>
</evidence>
<protein>
    <recommendedName>
        <fullName evidence="4">Immune-associated nucleotide-binding protein 3</fullName>
        <shortName evidence="4">AtIAN3</shortName>
    </recommendedName>
    <alternativeName>
        <fullName evidence="5">AIG1-like protein</fullName>
    </alternativeName>
</protein>
<dbReference type="EMBL" id="AC022288">
    <property type="protein sequence ID" value="AAG52210.1"/>
    <property type="molecule type" value="Genomic_DNA"/>
</dbReference>
<dbReference type="EMBL" id="CP002684">
    <property type="protein sequence ID" value="AEE31637.1"/>
    <property type="molecule type" value="Genomic_DNA"/>
</dbReference>
<dbReference type="EMBL" id="CP002684">
    <property type="protein sequence ID" value="ANM59627.1"/>
    <property type="molecule type" value="Genomic_DNA"/>
</dbReference>
<dbReference type="PIR" id="F86462">
    <property type="entry name" value="F86462"/>
</dbReference>
<dbReference type="RefSeq" id="NP_001319140.1">
    <property type="nucleotide sequence ID" value="NM_001333071.1"/>
</dbReference>
<dbReference type="RefSeq" id="NP_174651.1">
    <property type="nucleotide sequence ID" value="NM_103111.2"/>
</dbReference>
<dbReference type="SMR" id="Q9C8U6"/>
<dbReference type="FunCoup" id="Q9C8U6">
    <property type="interactions" value="48"/>
</dbReference>
<dbReference type="STRING" id="3702.Q9C8U6"/>
<dbReference type="GlyGen" id="Q9C8U6">
    <property type="glycosylation" value="1 site"/>
</dbReference>
<dbReference type="PaxDb" id="3702-AT1G33890.1"/>
<dbReference type="EnsemblPlants" id="AT1G33890.1">
    <property type="protein sequence ID" value="AT1G33890.1"/>
    <property type="gene ID" value="AT1G33890"/>
</dbReference>
<dbReference type="EnsemblPlants" id="AT1G33890.2">
    <property type="protein sequence ID" value="AT1G33890.2"/>
    <property type="gene ID" value="AT1G33890"/>
</dbReference>
<dbReference type="GeneID" id="840286"/>
<dbReference type="Gramene" id="AT1G33890.1">
    <property type="protein sequence ID" value="AT1G33890.1"/>
    <property type="gene ID" value="AT1G33890"/>
</dbReference>
<dbReference type="Gramene" id="AT1G33890.2">
    <property type="protein sequence ID" value="AT1G33890.2"/>
    <property type="gene ID" value="AT1G33890"/>
</dbReference>
<dbReference type="KEGG" id="ath:AT1G33890"/>
<dbReference type="Araport" id="AT1G33890"/>
<dbReference type="TAIR" id="AT1G33890">
    <property type="gene designation" value="IAN3"/>
</dbReference>
<dbReference type="eggNOG" id="ENOG502R7PE">
    <property type="taxonomic scope" value="Eukaryota"/>
</dbReference>
<dbReference type="HOGENOM" id="CLU_010468_0_1_1"/>
<dbReference type="InParanoid" id="Q9C8U6"/>
<dbReference type="OMA" id="CDEQEEV"/>
<dbReference type="OrthoDB" id="8954335at2759"/>
<dbReference type="PhylomeDB" id="Q9C8U6"/>
<dbReference type="PRO" id="PR:Q9C8U6"/>
<dbReference type="Proteomes" id="UP000006548">
    <property type="component" value="Chromosome 1"/>
</dbReference>
<dbReference type="ExpressionAtlas" id="Q9C8U6">
    <property type="expression patterns" value="baseline and differential"/>
</dbReference>
<dbReference type="GO" id="GO:0005783">
    <property type="term" value="C:endoplasmic reticulum"/>
    <property type="evidence" value="ECO:0000314"/>
    <property type="project" value="TAIR"/>
</dbReference>
<dbReference type="GO" id="GO:0005886">
    <property type="term" value="C:plasma membrane"/>
    <property type="evidence" value="ECO:0000314"/>
    <property type="project" value="TAIR"/>
</dbReference>
<dbReference type="GO" id="GO:0005525">
    <property type="term" value="F:GTP binding"/>
    <property type="evidence" value="ECO:0007669"/>
    <property type="project" value="UniProtKB-KW"/>
</dbReference>
<dbReference type="GO" id="GO:0034605">
    <property type="term" value="P:cellular response to heat"/>
    <property type="evidence" value="ECO:0000316"/>
    <property type="project" value="TAIR"/>
</dbReference>
<dbReference type="GO" id="GO:0030968">
    <property type="term" value="P:endoplasmic reticulum unfolded protein response"/>
    <property type="evidence" value="ECO:0000316"/>
    <property type="project" value="TAIR"/>
</dbReference>
<dbReference type="CDD" id="cd01852">
    <property type="entry name" value="AIG1"/>
    <property type="match status" value="1"/>
</dbReference>
<dbReference type="FunFam" id="3.40.50.300:FF:000840">
    <property type="entry name" value="Immune-associated nucleotide-binding protein 9"/>
    <property type="match status" value="1"/>
</dbReference>
<dbReference type="Gene3D" id="3.40.50.300">
    <property type="entry name" value="P-loop containing nucleotide triphosphate hydrolases"/>
    <property type="match status" value="1"/>
</dbReference>
<dbReference type="InterPro" id="IPR006703">
    <property type="entry name" value="G_AIG1"/>
</dbReference>
<dbReference type="InterPro" id="IPR045058">
    <property type="entry name" value="GIMA/IAN/Toc"/>
</dbReference>
<dbReference type="InterPro" id="IPR027417">
    <property type="entry name" value="P-loop_NTPase"/>
</dbReference>
<dbReference type="PANTHER" id="PTHR10903:SF146">
    <property type="entry name" value="AIG1-LIKE PROTEIN_ 48352-49494-RELATED"/>
    <property type="match status" value="1"/>
</dbReference>
<dbReference type="PANTHER" id="PTHR10903">
    <property type="entry name" value="GTPASE, IMAP FAMILY MEMBER-RELATED"/>
    <property type="match status" value="1"/>
</dbReference>
<dbReference type="Pfam" id="PF04548">
    <property type="entry name" value="AIG1"/>
    <property type="match status" value="1"/>
</dbReference>
<dbReference type="SUPFAM" id="SSF52540">
    <property type="entry name" value="P-loop containing nucleoside triphosphate hydrolases"/>
    <property type="match status" value="1"/>
</dbReference>
<dbReference type="PROSITE" id="PS51720">
    <property type="entry name" value="G_AIG1"/>
    <property type="match status" value="1"/>
</dbReference>
<keyword id="KW-0175">Coiled coil</keyword>
<keyword id="KW-0342">GTP-binding</keyword>
<keyword id="KW-0547">Nucleotide-binding</keyword>
<keyword id="KW-1185">Reference proteome</keyword>
<gene>
    <name evidence="4" type="primary">IAN3</name>
    <name evidence="7" type="ordered locus">At1g33890</name>
    <name evidence="8" type="ORF">T3M13.9</name>
</gene>
<organism>
    <name type="scientific">Arabidopsis thaliana</name>
    <name type="common">Mouse-ear cress</name>
    <dbReference type="NCBI Taxonomy" id="3702"/>
    <lineage>
        <taxon>Eukaryota</taxon>
        <taxon>Viridiplantae</taxon>
        <taxon>Streptophyta</taxon>
        <taxon>Embryophyta</taxon>
        <taxon>Tracheophyta</taxon>
        <taxon>Spermatophyta</taxon>
        <taxon>Magnoliopsida</taxon>
        <taxon>eudicotyledons</taxon>
        <taxon>Gunneridae</taxon>
        <taxon>Pentapetalae</taxon>
        <taxon>rosids</taxon>
        <taxon>malvids</taxon>
        <taxon>Brassicales</taxon>
        <taxon>Brassicaceae</taxon>
        <taxon>Camelineae</taxon>
        <taxon>Arabidopsis</taxon>
    </lineage>
</organism>